<gene>
    <name evidence="1" type="primary">rpoC</name>
    <name type="ordered locus">Glov_1340</name>
</gene>
<comment type="function">
    <text evidence="1">DNA-dependent RNA polymerase catalyzes the transcription of DNA into RNA using the four ribonucleoside triphosphates as substrates.</text>
</comment>
<comment type="catalytic activity">
    <reaction evidence="1">
        <text>RNA(n) + a ribonucleoside 5'-triphosphate = RNA(n+1) + diphosphate</text>
        <dbReference type="Rhea" id="RHEA:21248"/>
        <dbReference type="Rhea" id="RHEA-COMP:14527"/>
        <dbReference type="Rhea" id="RHEA-COMP:17342"/>
        <dbReference type="ChEBI" id="CHEBI:33019"/>
        <dbReference type="ChEBI" id="CHEBI:61557"/>
        <dbReference type="ChEBI" id="CHEBI:140395"/>
        <dbReference type="EC" id="2.7.7.6"/>
    </reaction>
</comment>
<comment type="cofactor">
    <cofactor evidence="1">
        <name>Mg(2+)</name>
        <dbReference type="ChEBI" id="CHEBI:18420"/>
    </cofactor>
    <text evidence="1">Binds 1 Mg(2+) ion per subunit.</text>
</comment>
<comment type="cofactor">
    <cofactor evidence="1">
        <name>Zn(2+)</name>
        <dbReference type="ChEBI" id="CHEBI:29105"/>
    </cofactor>
    <text evidence="1">Binds 2 Zn(2+) ions per subunit.</text>
</comment>
<comment type="subunit">
    <text evidence="1">The RNAP catalytic core consists of 2 alpha, 1 beta, 1 beta' and 1 omega subunit. When a sigma factor is associated with the core the holoenzyme is formed, which can initiate transcription.</text>
</comment>
<comment type="similarity">
    <text evidence="1">Belongs to the RNA polymerase beta' chain family.</text>
</comment>
<accession>B3E7S9</accession>
<keyword id="KW-0240">DNA-directed RNA polymerase</keyword>
<keyword id="KW-0460">Magnesium</keyword>
<keyword id="KW-0479">Metal-binding</keyword>
<keyword id="KW-0548">Nucleotidyltransferase</keyword>
<keyword id="KW-1185">Reference proteome</keyword>
<keyword id="KW-0804">Transcription</keyword>
<keyword id="KW-0808">Transferase</keyword>
<keyword id="KW-0862">Zinc</keyword>
<protein>
    <recommendedName>
        <fullName evidence="1">DNA-directed RNA polymerase subunit beta'</fullName>
        <shortName evidence="1">RNAP subunit beta'</shortName>
        <ecNumber evidence="1">2.7.7.6</ecNumber>
    </recommendedName>
    <alternativeName>
        <fullName evidence="1">RNA polymerase subunit beta'</fullName>
    </alternativeName>
    <alternativeName>
        <fullName evidence="1">Transcriptase subunit beta'</fullName>
    </alternativeName>
</protein>
<sequence>MEDYFTGSFFDKPKDPLHFSAIRISISSPEKIRERSFGEVKKPETINYRTFKPERDGLFCAKIFGPTKDYECNCGKYKRMKHRGIICEKCGVEVIPSKVRRERLGHIDLATPVAHIWFLKSLPSRIGNLLDITLKDLERVLYFEAFAITDPGTTPLKFCEVLSEDKFLKAQEEYGIDAFEGGMGAEAVRKCLQALELDELAVQLRMEMMESTSEAKRKKVAKRLKVVEAFKQSGNKPEWMILECIPVLPPELRPLVPLDGGRFATSDLNDLYRRVINRNNRLKRLCELQAPEVIIRNEKRMLQEAVDALFDNGRRGRAIAGPNKRPLKSLSDMLKGKSGRFRQNLLGKRVDYSGRSVIVVGPELKLHQCGLPKKMALELFKPFIYNKLEERGYVTTIKSAKKMVEKERPEVWDVLEEVIREHPVMLNRAPTLHRLGIQAFEPVLIEGKAIQLHPLVCTAFNADFDGDQMAVHLPLSIESQVETRVLMMSTNNILSPAHGKPIIVPSQDMVLGTYYMTRERIGAKGERTTFASPEEVRIAFDHGEVDMQARVKVRMIDAPDNPDEKPQLVDTTVGRIILREVLPPQVPFSAINKVMNKKELSNLIDTCYRLAGNKETVILADRLKETGFRYANLAGISICIDDMVIPEGKQAIIDRANEEVQEIQNQYTEGLITDGERYNKVIDIWAKSTEEIAKEMLGNLSKEIVVDSDGKEVEIPSFNAIHMMADSGARGSAQQIRQLAGMRGLMAKPSGEIIETPITANFREGLTVLQYFISTHGARKGLADTALKTANSGYLTRRLVDVAQDAIITEDDCGTLDGLTVSSLTEGGEVIEHIGDRILGRVALDDIHDPITDEILVEANQEIDENLVKKIEDAGLEKVKMRSVLTCQSKRGICAKCYGRDLARGHIVNMGEAVGVIAAQSIGEPGTQLTMRTFHIGGTASRAAEQTSLEARYEGLVKYINLHTVVNAEGFHIVMSRNGEVAVVDETGRERERYGVVYGAKLKIAPEGSVKAGETLAEWDPYTMPILTEVGGRVKFGDIIEGVTMEEKLDDVTGLSRKEIVETKDSDKRPRIAIKDAGESGGTIGRYYLPVGAIINVTEDAVICGGDIIAKIPRETTKTKDITGGLPRVAELFEARKPKDFAVITEIDGKVNFGKDSKGKRKVVVTPELGEPKEYLIPKGKHISVHEGDYVRAGEPLMDGSSNPHDILRVLGVKELAKYLVDEVQEVYRLQGVKINDKHIEVIVRQMLRRVRIKEVGDTNLLIDDQVERYVFEEENAKAFAEGKRPATAEPLLLGITKASLSTESFISAASFQETTKVLTQAAIEGKVDALRGLKENVIMGRLIPAGTGIPRYRHLRLHVEEQTGEQAVTQLDAAPDLDAEQQAA</sequence>
<evidence type="ECO:0000255" key="1">
    <source>
        <dbReference type="HAMAP-Rule" id="MF_01322"/>
    </source>
</evidence>
<reference key="1">
    <citation type="submission" date="2008-05" db="EMBL/GenBank/DDBJ databases">
        <title>Complete sequence of chromosome of Geobacter lovleyi SZ.</title>
        <authorList>
            <consortium name="US DOE Joint Genome Institute"/>
            <person name="Lucas S."/>
            <person name="Copeland A."/>
            <person name="Lapidus A."/>
            <person name="Glavina del Rio T."/>
            <person name="Dalin E."/>
            <person name="Tice H."/>
            <person name="Bruce D."/>
            <person name="Goodwin L."/>
            <person name="Pitluck S."/>
            <person name="Chertkov O."/>
            <person name="Meincke L."/>
            <person name="Brettin T."/>
            <person name="Detter J.C."/>
            <person name="Han C."/>
            <person name="Tapia R."/>
            <person name="Kuske C.R."/>
            <person name="Schmutz J."/>
            <person name="Larimer F."/>
            <person name="Land M."/>
            <person name="Hauser L."/>
            <person name="Kyrpides N."/>
            <person name="Mikhailova N."/>
            <person name="Sung Y."/>
            <person name="Fletcher K.E."/>
            <person name="Ritalahti K.M."/>
            <person name="Loeffler F.E."/>
            <person name="Richardson P."/>
        </authorList>
    </citation>
    <scope>NUCLEOTIDE SEQUENCE [LARGE SCALE GENOMIC DNA]</scope>
    <source>
        <strain>ATCC BAA-1151 / DSM 17278 / SZ</strain>
    </source>
</reference>
<name>RPOC_TRIL1</name>
<feature type="chain" id="PRO_0000353374" description="DNA-directed RNA polymerase subunit beta'">
    <location>
        <begin position="1"/>
        <end position="1385"/>
    </location>
</feature>
<feature type="binding site" evidence="1">
    <location>
        <position position="72"/>
    </location>
    <ligand>
        <name>Zn(2+)</name>
        <dbReference type="ChEBI" id="CHEBI:29105"/>
        <label>1</label>
    </ligand>
</feature>
<feature type="binding site" evidence="1">
    <location>
        <position position="74"/>
    </location>
    <ligand>
        <name>Zn(2+)</name>
        <dbReference type="ChEBI" id="CHEBI:29105"/>
        <label>1</label>
    </ligand>
</feature>
<feature type="binding site" evidence="1">
    <location>
        <position position="87"/>
    </location>
    <ligand>
        <name>Zn(2+)</name>
        <dbReference type="ChEBI" id="CHEBI:29105"/>
        <label>1</label>
    </ligand>
</feature>
<feature type="binding site" evidence="1">
    <location>
        <position position="90"/>
    </location>
    <ligand>
        <name>Zn(2+)</name>
        <dbReference type="ChEBI" id="CHEBI:29105"/>
        <label>1</label>
    </ligand>
</feature>
<feature type="binding site" evidence="1">
    <location>
        <position position="463"/>
    </location>
    <ligand>
        <name>Mg(2+)</name>
        <dbReference type="ChEBI" id="CHEBI:18420"/>
    </ligand>
</feature>
<feature type="binding site" evidence="1">
    <location>
        <position position="465"/>
    </location>
    <ligand>
        <name>Mg(2+)</name>
        <dbReference type="ChEBI" id="CHEBI:18420"/>
    </ligand>
</feature>
<feature type="binding site" evidence="1">
    <location>
        <position position="467"/>
    </location>
    <ligand>
        <name>Mg(2+)</name>
        <dbReference type="ChEBI" id="CHEBI:18420"/>
    </ligand>
</feature>
<feature type="binding site" evidence="1">
    <location>
        <position position="813"/>
    </location>
    <ligand>
        <name>Zn(2+)</name>
        <dbReference type="ChEBI" id="CHEBI:29105"/>
        <label>2</label>
    </ligand>
</feature>
<feature type="binding site" evidence="1">
    <location>
        <position position="887"/>
    </location>
    <ligand>
        <name>Zn(2+)</name>
        <dbReference type="ChEBI" id="CHEBI:29105"/>
        <label>2</label>
    </ligand>
</feature>
<feature type="binding site" evidence="1">
    <location>
        <position position="894"/>
    </location>
    <ligand>
        <name>Zn(2+)</name>
        <dbReference type="ChEBI" id="CHEBI:29105"/>
        <label>2</label>
    </ligand>
</feature>
<feature type="binding site" evidence="1">
    <location>
        <position position="897"/>
    </location>
    <ligand>
        <name>Zn(2+)</name>
        <dbReference type="ChEBI" id="CHEBI:29105"/>
        <label>2</label>
    </ligand>
</feature>
<proteinExistence type="inferred from homology"/>
<dbReference type="EC" id="2.7.7.6" evidence="1"/>
<dbReference type="EMBL" id="CP001089">
    <property type="protein sequence ID" value="ACD95061.1"/>
    <property type="molecule type" value="Genomic_DNA"/>
</dbReference>
<dbReference type="RefSeq" id="WP_012469407.1">
    <property type="nucleotide sequence ID" value="NC_010814.1"/>
</dbReference>
<dbReference type="SMR" id="B3E7S9"/>
<dbReference type="STRING" id="398767.Glov_1340"/>
<dbReference type="KEGG" id="glo:Glov_1340"/>
<dbReference type="eggNOG" id="COG0086">
    <property type="taxonomic scope" value="Bacteria"/>
</dbReference>
<dbReference type="HOGENOM" id="CLU_000524_3_1_7"/>
<dbReference type="OrthoDB" id="9815296at2"/>
<dbReference type="Proteomes" id="UP000002420">
    <property type="component" value="Chromosome"/>
</dbReference>
<dbReference type="GO" id="GO:0000428">
    <property type="term" value="C:DNA-directed RNA polymerase complex"/>
    <property type="evidence" value="ECO:0007669"/>
    <property type="project" value="UniProtKB-KW"/>
</dbReference>
<dbReference type="GO" id="GO:0003677">
    <property type="term" value="F:DNA binding"/>
    <property type="evidence" value="ECO:0007669"/>
    <property type="project" value="UniProtKB-UniRule"/>
</dbReference>
<dbReference type="GO" id="GO:0003899">
    <property type="term" value="F:DNA-directed RNA polymerase activity"/>
    <property type="evidence" value="ECO:0007669"/>
    <property type="project" value="UniProtKB-UniRule"/>
</dbReference>
<dbReference type="GO" id="GO:0000287">
    <property type="term" value="F:magnesium ion binding"/>
    <property type="evidence" value="ECO:0007669"/>
    <property type="project" value="UniProtKB-UniRule"/>
</dbReference>
<dbReference type="GO" id="GO:0008270">
    <property type="term" value="F:zinc ion binding"/>
    <property type="evidence" value="ECO:0007669"/>
    <property type="project" value="UniProtKB-UniRule"/>
</dbReference>
<dbReference type="GO" id="GO:0006351">
    <property type="term" value="P:DNA-templated transcription"/>
    <property type="evidence" value="ECO:0007669"/>
    <property type="project" value="UniProtKB-UniRule"/>
</dbReference>
<dbReference type="CDD" id="cd02655">
    <property type="entry name" value="RNAP_beta'_C"/>
    <property type="match status" value="1"/>
</dbReference>
<dbReference type="CDD" id="cd01609">
    <property type="entry name" value="RNAP_beta'_N"/>
    <property type="match status" value="1"/>
</dbReference>
<dbReference type="FunFam" id="1.10.132.30:FF:000003">
    <property type="entry name" value="DNA-directed RNA polymerase subunit beta"/>
    <property type="match status" value="1"/>
</dbReference>
<dbReference type="FunFam" id="1.10.150.390:FF:000002">
    <property type="entry name" value="DNA-directed RNA polymerase subunit beta"/>
    <property type="match status" value="1"/>
</dbReference>
<dbReference type="FunFam" id="1.10.40.90:FF:000001">
    <property type="entry name" value="DNA-directed RNA polymerase subunit beta"/>
    <property type="match status" value="1"/>
</dbReference>
<dbReference type="Gene3D" id="1.10.132.30">
    <property type="match status" value="1"/>
</dbReference>
<dbReference type="Gene3D" id="1.10.150.390">
    <property type="match status" value="1"/>
</dbReference>
<dbReference type="Gene3D" id="1.10.1790.20">
    <property type="match status" value="1"/>
</dbReference>
<dbReference type="Gene3D" id="1.10.40.90">
    <property type="match status" value="1"/>
</dbReference>
<dbReference type="Gene3D" id="2.40.40.20">
    <property type="match status" value="1"/>
</dbReference>
<dbReference type="Gene3D" id="2.40.50.100">
    <property type="match status" value="3"/>
</dbReference>
<dbReference type="Gene3D" id="4.10.860.120">
    <property type="entry name" value="RNA polymerase II, clamp domain"/>
    <property type="match status" value="1"/>
</dbReference>
<dbReference type="Gene3D" id="1.10.274.100">
    <property type="entry name" value="RNA polymerase Rpb1, domain 3"/>
    <property type="match status" value="2"/>
</dbReference>
<dbReference type="HAMAP" id="MF_01322">
    <property type="entry name" value="RNApol_bact_RpoC"/>
    <property type="match status" value="1"/>
</dbReference>
<dbReference type="InterPro" id="IPR045867">
    <property type="entry name" value="DNA-dir_RpoC_beta_prime"/>
</dbReference>
<dbReference type="InterPro" id="IPR012754">
    <property type="entry name" value="DNA-dir_RpoC_beta_prime_bact"/>
</dbReference>
<dbReference type="InterPro" id="IPR000722">
    <property type="entry name" value="RNA_pol_asu"/>
</dbReference>
<dbReference type="InterPro" id="IPR006592">
    <property type="entry name" value="RNA_pol_N"/>
</dbReference>
<dbReference type="InterPro" id="IPR007080">
    <property type="entry name" value="RNA_pol_Rpb1_1"/>
</dbReference>
<dbReference type="InterPro" id="IPR007066">
    <property type="entry name" value="RNA_pol_Rpb1_3"/>
</dbReference>
<dbReference type="InterPro" id="IPR042102">
    <property type="entry name" value="RNA_pol_Rpb1_3_sf"/>
</dbReference>
<dbReference type="InterPro" id="IPR007083">
    <property type="entry name" value="RNA_pol_Rpb1_4"/>
</dbReference>
<dbReference type="InterPro" id="IPR007081">
    <property type="entry name" value="RNA_pol_Rpb1_5"/>
</dbReference>
<dbReference type="InterPro" id="IPR044893">
    <property type="entry name" value="RNA_pol_Rpb1_clamp_domain"/>
</dbReference>
<dbReference type="InterPro" id="IPR038120">
    <property type="entry name" value="Rpb1_funnel_sf"/>
</dbReference>
<dbReference type="NCBIfam" id="TIGR02386">
    <property type="entry name" value="rpoC_TIGR"/>
    <property type="match status" value="1"/>
</dbReference>
<dbReference type="PANTHER" id="PTHR19376">
    <property type="entry name" value="DNA-DIRECTED RNA POLYMERASE"/>
    <property type="match status" value="1"/>
</dbReference>
<dbReference type="PANTHER" id="PTHR19376:SF54">
    <property type="entry name" value="DNA-DIRECTED RNA POLYMERASE SUBUNIT BETA"/>
    <property type="match status" value="1"/>
</dbReference>
<dbReference type="Pfam" id="PF04997">
    <property type="entry name" value="RNA_pol_Rpb1_1"/>
    <property type="match status" value="1"/>
</dbReference>
<dbReference type="Pfam" id="PF00623">
    <property type="entry name" value="RNA_pol_Rpb1_2"/>
    <property type="match status" value="2"/>
</dbReference>
<dbReference type="Pfam" id="PF04983">
    <property type="entry name" value="RNA_pol_Rpb1_3"/>
    <property type="match status" value="1"/>
</dbReference>
<dbReference type="Pfam" id="PF05000">
    <property type="entry name" value="RNA_pol_Rpb1_4"/>
    <property type="match status" value="1"/>
</dbReference>
<dbReference type="Pfam" id="PF04998">
    <property type="entry name" value="RNA_pol_Rpb1_5"/>
    <property type="match status" value="1"/>
</dbReference>
<dbReference type="SMART" id="SM00663">
    <property type="entry name" value="RPOLA_N"/>
    <property type="match status" value="1"/>
</dbReference>
<dbReference type="SUPFAM" id="SSF64484">
    <property type="entry name" value="beta and beta-prime subunits of DNA dependent RNA-polymerase"/>
    <property type="match status" value="1"/>
</dbReference>
<organism>
    <name type="scientific">Trichlorobacter lovleyi (strain ATCC BAA-1151 / DSM 17278 / SZ)</name>
    <name type="common">Geobacter lovleyi</name>
    <dbReference type="NCBI Taxonomy" id="398767"/>
    <lineage>
        <taxon>Bacteria</taxon>
        <taxon>Pseudomonadati</taxon>
        <taxon>Thermodesulfobacteriota</taxon>
        <taxon>Desulfuromonadia</taxon>
        <taxon>Geobacterales</taxon>
        <taxon>Geobacteraceae</taxon>
        <taxon>Trichlorobacter</taxon>
    </lineage>
</organism>